<protein>
    <recommendedName>
        <fullName evidence="1">Dihydroorotase</fullName>
        <shortName evidence="1">DHOase</shortName>
        <ecNumber evidence="1">3.5.2.3</ecNumber>
    </recommendedName>
</protein>
<proteinExistence type="inferred from homology"/>
<name>PYRC_STRPQ</name>
<comment type="function">
    <text evidence="1">Catalyzes the reversible cyclization of carbamoyl aspartate to dihydroorotate.</text>
</comment>
<comment type="catalytic activity">
    <reaction evidence="1">
        <text>(S)-dihydroorotate + H2O = N-carbamoyl-L-aspartate + H(+)</text>
        <dbReference type="Rhea" id="RHEA:24296"/>
        <dbReference type="ChEBI" id="CHEBI:15377"/>
        <dbReference type="ChEBI" id="CHEBI:15378"/>
        <dbReference type="ChEBI" id="CHEBI:30864"/>
        <dbReference type="ChEBI" id="CHEBI:32814"/>
        <dbReference type="EC" id="3.5.2.3"/>
    </reaction>
</comment>
<comment type="cofactor">
    <cofactor evidence="1">
        <name>Zn(2+)</name>
        <dbReference type="ChEBI" id="CHEBI:29105"/>
    </cofactor>
    <text evidence="1">Binds 2 Zn(2+) ions per subunit.</text>
</comment>
<comment type="pathway">
    <text evidence="1">Pyrimidine metabolism; UMP biosynthesis via de novo pathway; (S)-dihydroorotate from bicarbonate: step 3/3.</text>
</comment>
<comment type="similarity">
    <text evidence="1">Belongs to the metallo-dependent hydrolases superfamily. DHOase family. Class I DHOase subfamily.</text>
</comment>
<evidence type="ECO:0000255" key="1">
    <source>
        <dbReference type="HAMAP-Rule" id="MF_00220"/>
    </source>
</evidence>
<keyword id="KW-0378">Hydrolase</keyword>
<keyword id="KW-0479">Metal-binding</keyword>
<keyword id="KW-0665">Pyrimidine biosynthesis</keyword>
<keyword id="KW-0862">Zinc</keyword>
<sequence length="422" mass="45248">MILIKNGRVMDPKSQRDQVADVLIDGKQIVKIASAIECQEAQVIDASGLIVAPGLVDIHVHFREPGQTHKEDIHTGALAAAAGGVTTVVMMANTNPVISDVETLQEVLASAAKEKIHIYTNASVTQAFNGKDVTDFKALLEAGAVSFSDDGIPLESSKVLKEAFDLANANQTFISLHEEDPQLNGVLGFNEGIAEEHFHFCGATGVAEYSMIARDVMIAYDRQAHVHIQHLSKAESVQVVAFAQQLGAKVTAEVSPQHFSTTEDLLLTAGTSAKMNPPLRTQRDRLAVIEGLKSGVITVIATDHAPHHKDEKAVDDMTKAPSGMTGLETSLSLGLTHLVEPGHLTLMSLLEKMTLNPALLYGFDAGYLAENGPADLVIFADKQERLITENFASKASNSPFIGNKLKGVVKYTIADGEVVYPN</sequence>
<gene>
    <name evidence="1" type="primary">pyrC</name>
    <name type="ordered locus">SPs1231</name>
</gene>
<accession>P0DD65</accession>
<accession>Q7CF73</accession>
<accession>Q8P1B5</accession>
<reference key="1">
    <citation type="journal article" date="2003" name="Genome Res.">
        <title>Genome sequence of an M3 strain of Streptococcus pyogenes reveals a large-scale genomic rearrangement in invasive strains and new insights into phage evolution.</title>
        <authorList>
            <person name="Nakagawa I."/>
            <person name="Kurokawa K."/>
            <person name="Yamashita A."/>
            <person name="Nakata M."/>
            <person name="Tomiyasu Y."/>
            <person name="Okahashi N."/>
            <person name="Kawabata S."/>
            <person name="Yamazaki K."/>
            <person name="Shiba T."/>
            <person name="Yasunaga T."/>
            <person name="Hayashi H."/>
            <person name="Hattori M."/>
            <person name="Hamada S."/>
        </authorList>
    </citation>
    <scope>NUCLEOTIDE SEQUENCE [LARGE SCALE GENOMIC DNA]</scope>
    <source>
        <strain>SSI-1</strain>
    </source>
</reference>
<feature type="chain" id="PRO_0000411472" description="Dihydroorotase">
    <location>
        <begin position="1"/>
        <end position="422"/>
    </location>
</feature>
<feature type="active site" evidence="1">
    <location>
        <position position="303"/>
    </location>
</feature>
<feature type="binding site" evidence="1">
    <location>
        <position position="59"/>
    </location>
    <ligand>
        <name>Zn(2+)</name>
        <dbReference type="ChEBI" id="CHEBI:29105"/>
        <label>1</label>
    </ligand>
</feature>
<feature type="binding site" evidence="1">
    <location>
        <begin position="61"/>
        <end position="63"/>
    </location>
    <ligand>
        <name>substrate</name>
    </ligand>
</feature>
<feature type="binding site" evidence="1">
    <location>
        <position position="61"/>
    </location>
    <ligand>
        <name>Zn(2+)</name>
        <dbReference type="ChEBI" id="CHEBI:29105"/>
        <label>1</label>
    </ligand>
</feature>
<feature type="binding site" evidence="1">
    <location>
        <position position="93"/>
    </location>
    <ligand>
        <name>substrate</name>
    </ligand>
</feature>
<feature type="binding site" evidence="1">
    <location>
        <position position="150"/>
    </location>
    <ligand>
        <name>Zn(2+)</name>
        <dbReference type="ChEBI" id="CHEBI:29105"/>
        <label>1</label>
    </ligand>
</feature>
<feature type="binding site" evidence="1">
    <location>
        <position position="150"/>
    </location>
    <ligand>
        <name>Zn(2+)</name>
        <dbReference type="ChEBI" id="CHEBI:29105"/>
        <label>2</label>
    </ligand>
</feature>
<feature type="binding site" evidence="1">
    <location>
        <position position="177"/>
    </location>
    <ligand>
        <name>Zn(2+)</name>
        <dbReference type="ChEBI" id="CHEBI:29105"/>
        <label>2</label>
    </ligand>
</feature>
<feature type="binding site" evidence="1">
    <location>
        <position position="230"/>
    </location>
    <ligand>
        <name>Zn(2+)</name>
        <dbReference type="ChEBI" id="CHEBI:29105"/>
        <label>2</label>
    </ligand>
</feature>
<feature type="binding site" evidence="1">
    <location>
        <position position="276"/>
    </location>
    <ligand>
        <name>substrate</name>
    </ligand>
</feature>
<feature type="binding site" evidence="1">
    <location>
        <position position="303"/>
    </location>
    <ligand>
        <name>Zn(2+)</name>
        <dbReference type="ChEBI" id="CHEBI:29105"/>
        <label>1</label>
    </ligand>
</feature>
<feature type="binding site" evidence="1">
    <location>
        <position position="307"/>
    </location>
    <ligand>
        <name>substrate</name>
    </ligand>
</feature>
<dbReference type="EC" id="3.5.2.3" evidence="1"/>
<dbReference type="EMBL" id="BA000034">
    <property type="protein sequence ID" value="BAC64326.1"/>
    <property type="molecule type" value="Genomic_DNA"/>
</dbReference>
<dbReference type="RefSeq" id="WP_002984912.1">
    <property type="nucleotide sequence ID" value="NC_004606.1"/>
</dbReference>
<dbReference type="SMR" id="P0DD65"/>
<dbReference type="KEGG" id="sps:SPs1231"/>
<dbReference type="HOGENOM" id="CLU_015572_1_0_9"/>
<dbReference type="UniPathway" id="UPA00070">
    <property type="reaction ID" value="UER00117"/>
</dbReference>
<dbReference type="GO" id="GO:0005737">
    <property type="term" value="C:cytoplasm"/>
    <property type="evidence" value="ECO:0007669"/>
    <property type="project" value="TreeGrafter"/>
</dbReference>
<dbReference type="GO" id="GO:0004038">
    <property type="term" value="F:allantoinase activity"/>
    <property type="evidence" value="ECO:0007669"/>
    <property type="project" value="TreeGrafter"/>
</dbReference>
<dbReference type="GO" id="GO:0004151">
    <property type="term" value="F:dihydroorotase activity"/>
    <property type="evidence" value="ECO:0007669"/>
    <property type="project" value="UniProtKB-UniRule"/>
</dbReference>
<dbReference type="GO" id="GO:0008270">
    <property type="term" value="F:zinc ion binding"/>
    <property type="evidence" value="ECO:0007669"/>
    <property type="project" value="UniProtKB-UniRule"/>
</dbReference>
<dbReference type="GO" id="GO:0044205">
    <property type="term" value="P:'de novo' UMP biosynthetic process"/>
    <property type="evidence" value="ECO:0007669"/>
    <property type="project" value="UniProtKB-UniRule"/>
</dbReference>
<dbReference type="GO" id="GO:0006145">
    <property type="term" value="P:purine nucleobase catabolic process"/>
    <property type="evidence" value="ECO:0007669"/>
    <property type="project" value="TreeGrafter"/>
</dbReference>
<dbReference type="CDD" id="cd01317">
    <property type="entry name" value="DHOase_IIa"/>
    <property type="match status" value="1"/>
</dbReference>
<dbReference type="Gene3D" id="3.20.20.140">
    <property type="entry name" value="Metal-dependent hydrolases"/>
    <property type="match status" value="1"/>
</dbReference>
<dbReference type="HAMAP" id="MF_00220_B">
    <property type="entry name" value="PyrC_classI_B"/>
    <property type="match status" value="1"/>
</dbReference>
<dbReference type="InterPro" id="IPR006680">
    <property type="entry name" value="Amidohydro-rel"/>
</dbReference>
<dbReference type="InterPro" id="IPR004722">
    <property type="entry name" value="DHOase"/>
</dbReference>
<dbReference type="InterPro" id="IPR050138">
    <property type="entry name" value="DHOase/Allantoinase_Hydrolase"/>
</dbReference>
<dbReference type="InterPro" id="IPR002195">
    <property type="entry name" value="Dihydroorotase_CS"/>
</dbReference>
<dbReference type="InterPro" id="IPR011059">
    <property type="entry name" value="Metal-dep_hydrolase_composite"/>
</dbReference>
<dbReference type="InterPro" id="IPR032466">
    <property type="entry name" value="Metal_Hydrolase"/>
</dbReference>
<dbReference type="NCBIfam" id="NF006839">
    <property type="entry name" value="PRK09357.1-4"/>
    <property type="match status" value="1"/>
</dbReference>
<dbReference type="NCBIfam" id="TIGR00857">
    <property type="entry name" value="pyrC_multi"/>
    <property type="match status" value="1"/>
</dbReference>
<dbReference type="PANTHER" id="PTHR43668">
    <property type="entry name" value="ALLANTOINASE"/>
    <property type="match status" value="1"/>
</dbReference>
<dbReference type="PANTHER" id="PTHR43668:SF2">
    <property type="entry name" value="ALLANTOINASE"/>
    <property type="match status" value="1"/>
</dbReference>
<dbReference type="Pfam" id="PF01979">
    <property type="entry name" value="Amidohydro_1"/>
    <property type="match status" value="1"/>
</dbReference>
<dbReference type="SUPFAM" id="SSF51338">
    <property type="entry name" value="Composite domain of metallo-dependent hydrolases"/>
    <property type="match status" value="1"/>
</dbReference>
<dbReference type="SUPFAM" id="SSF51556">
    <property type="entry name" value="Metallo-dependent hydrolases"/>
    <property type="match status" value="1"/>
</dbReference>
<dbReference type="PROSITE" id="PS00482">
    <property type="entry name" value="DIHYDROOROTASE_1"/>
    <property type="match status" value="1"/>
</dbReference>
<dbReference type="PROSITE" id="PS00483">
    <property type="entry name" value="DIHYDROOROTASE_2"/>
    <property type="match status" value="1"/>
</dbReference>
<organism>
    <name type="scientific">Streptococcus pyogenes serotype M3 (strain SSI-1)</name>
    <dbReference type="NCBI Taxonomy" id="193567"/>
    <lineage>
        <taxon>Bacteria</taxon>
        <taxon>Bacillati</taxon>
        <taxon>Bacillota</taxon>
        <taxon>Bacilli</taxon>
        <taxon>Lactobacillales</taxon>
        <taxon>Streptococcaceae</taxon>
        <taxon>Streptococcus</taxon>
    </lineage>
</organism>